<evidence type="ECO:0000255" key="1">
    <source>
        <dbReference type="HAMAP-Rule" id="MF_00059"/>
    </source>
</evidence>
<gene>
    <name evidence="1" type="primary">rpoA</name>
    <name type="ordered locus">CC_1272</name>
</gene>
<reference key="1">
    <citation type="journal article" date="2001" name="Proc. Natl. Acad. Sci. U.S.A.">
        <title>Complete genome sequence of Caulobacter crescentus.</title>
        <authorList>
            <person name="Nierman W.C."/>
            <person name="Feldblyum T.V."/>
            <person name="Laub M.T."/>
            <person name="Paulsen I.T."/>
            <person name="Nelson K.E."/>
            <person name="Eisen J.A."/>
            <person name="Heidelberg J.F."/>
            <person name="Alley M.R.K."/>
            <person name="Ohta N."/>
            <person name="Maddock J.R."/>
            <person name="Potocka I."/>
            <person name="Nelson W.C."/>
            <person name="Newton A."/>
            <person name="Stephens C."/>
            <person name="Phadke N.D."/>
            <person name="Ely B."/>
            <person name="DeBoy R.T."/>
            <person name="Dodson R.J."/>
            <person name="Durkin A.S."/>
            <person name="Gwinn M.L."/>
            <person name="Haft D.H."/>
            <person name="Kolonay J.F."/>
            <person name="Smit J."/>
            <person name="Craven M.B."/>
            <person name="Khouri H.M."/>
            <person name="Shetty J."/>
            <person name="Berry K.J."/>
            <person name="Utterback T.R."/>
            <person name="Tran K."/>
            <person name="Wolf A.M."/>
            <person name="Vamathevan J.J."/>
            <person name="Ermolaeva M.D."/>
            <person name="White O."/>
            <person name="Salzberg S.L."/>
            <person name="Venter J.C."/>
            <person name="Shapiro L."/>
            <person name="Fraser C.M."/>
        </authorList>
    </citation>
    <scope>NUCLEOTIDE SEQUENCE [LARGE SCALE GENOMIC DNA]</scope>
    <source>
        <strain>ATCC 19089 / CIP 103742 / CB 15</strain>
    </source>
</reference>
<comment type="function">
    <text evidence="1">DNA-dependent RNA polymerase catalyzes the transcription of DNA into RNA using the four ribonucleoside triphosphates as substrates.</text>
</comment>
<comment type="catalytic activity">
    <reaction evidence="1">
        <text>RNA(n) + a ribonucleoside 5'-triphosphate = RNA(n+1) + diphosphate</text>
        <dbReference type="Rhea" id="RHEA:21248"/>
        <dbReference type="Rhea" id="RHEA-COMP:14527"/>
        <dbReference type="Rhea" id="RHEA-COMP:17342"/>
        <dbReference type="ChEBI" id="CHEBI:33019"/>
        <dbReference type="ChEBI" id="CHEBI:61557"/>
        <dbReference type="ChEBI" id="CHEBI:140395"/>
        <dbReference type="EC" id="2.7.7.6"/>
    </reaction>
</comment>
<comment type="subunit">
    <text evidence="1">Homodimer. The RNAP catalytic core consists of 2 alpha, 1 beta, 1 beta' and 1 omega subunit. When a sigma factor is associated with the core the holoenzyme is formed, which can initiate transcription.</text>
</comment>
<comment type="domain">
    <text evidence="1">The N-terminal domain is essential for RNAP assembly and basal transcription, whereas the C-terminal domain is involved in interaction with transcriptional regulators and with upstream promoter elements.</text>
</comment>
<comment type="similarity">
    <text evidence="1">Belongs to the RNA polymerase alpha chain family.</text>
</comment>
<sequence>MIERNWNELIRPEKPQIETGADATRKARIVAEPLERGFGVTLGNALRRVLLSSLQGAAVTAIQIDGVVHEFSSLEGVREDVVDIVLNIKQLAVRMHAEGPKRMTLRATGPGPVTAGQIETPADIEILNPDHVLCTLDDGASVRMEFTVNNGKGYVPADRNRPEDAPIGLIAVDALYSPVKRVAYRVEPTRQGQSLDYDKLILEVETNGAVTPVDAVAYAARILQDQLQIFITFEEPKAKSADESKPELPFNPALLKKVDELELSVRSANCLKNDNIVYIGDLIQKTEAEMLRTPNFGRKSLNEIKEVLAGMGLHLGMDVPNWPPENIEDLAKKFEDQI</sequence>
<name>RPOA_CAUVC</name>
<dbReference type="EC" id="2.7.7.6" evidence="1"/>
<dbReference type="EMBL" id="AE005673">
    <property type="protein sequence ID" value="AAK23253.1"/>
    <property type="molecule type" value="Genomic_DNA"/>
</dbReference>
<dbReference type="PIR" id="A87407">
    <property type="entry name" value="A87407"/>
</dbReference>
<dbReference type="RefSeq" id="NP_420085.1">
    <property type="nucleotide sequence ID" value="NC_002696.2"/>
</dbReference>
<dbReference type="RefSeq" id="WP_010919151.1">
    <property type="nucleotide sequence ID" value="NC_002696.2"/>
</dbReference>
<dbReference type="SMR" id="Q9A8S9"/>
<dbReference type="STRING" id="190650.CC_1272"/>
<dbReference type="EnsemblBacteria" id="AAK23253">
    <property type="protein sequence ID" value="AAK23253"/>
    <property type="gene ID" value="CC_1272"/>
</dbReference>
<dbReference type="KEGG" id="ccr:CC_1272"/>
<dbReference type="PATRIC" id="fig|190650.5.peg.1297"/>
<dbReference type="eggNOG" id="COG0202">
    <property type="taxonomic scope" value="Bacteria"/>
</dbReference>
<dbReference type="HOGENOM" id="CLU_053084_0_0_5"/>
<dbReference type="BioCyc" id="CAULO:CC1272-MONOMER"/>
<dbReference type="Proteomes" id="UP000001816">
    <property type="component" value="Chromosome"/>
</dbReference>
<dbReference type="GO" id="GO:0005737">
    <property type="term" value="C:cytoplasm"/>
    <property type="evidence" value="ECO:0007669"/>
    <property type="project" value="UniProtKB-ARBA"/>
</dbReference>
<dbReference type="GO" id="GO:0000428">
    <property type="term" value="C:DNA-directed RNA polymerase complex"/>
    <property type="evidence" value="ECO:0007669"/>
    <property type="project" value="UniProtKB-KW"/>
</dbReference>
<dbReference type="GO" id="GO:0003677">
    <property type="term" value="F:DNA binding"/>
    <property type="evidence" value="ECO:0007669"/>
    <property type="project" value="UniProtKB-UniRule"/>
</dbReference>
<dbReference type="GO" id="GO:0003899">
    <property type="term" value="F:DNA-directed RNA polymerase activity"/>
    <property type="evidence" value="ECO:0007669"/>
    <property type="project" value="UniProtKB-UniRule"/>
</dbReference>
<dbReference type="GO" id="GO:0046983">
    <property type="term" value="F:protein dimerization activity"/>
    <property type="evidence" value="ECO:0007669"/>
    <property type="project" value="InterPro"/>
</dbReference>
<dbReference type="GO" id="GO:0006351">
    <property type="term" value="P:DNA-templated transcription"/>
    <property type="evidence" value="ECO:0007669"/>
    <property type="project" value="UniProtKB-UniRule"/>
</dbReference>
<dbReference type="CDD" id="cd06928">
    <property type="entry name" value="RNAP_alpha_NTD"/>
    <property type="match status" value="1"/>
</dbReference>
<dbReference type="FunFam" id="1.10.150.20:FF:000001">
    <property type="entry name" value="DNA-directed RNA polymerase subunit alpha"/>
    <property type="match status" value="1"/>
</dbReference>
<dbReference type="FunFam" id="2.170.120.12:FF:000001">
    <property type="entry name" value="DNA-directed RNA polymerase subunit alpha"/>
    <property type="match status" value="1"/>
</dbReference>
<dbReference type="Gene3D" id="1.10.150.20">
    <property type="entry name" value="5' to 3' exonuclease, C-terminal subdomain"/>
    <property type="match status" value="1"/>
</dbReference>
<dbReference type="Gene3D" id="2.170.120.12">
    <property type="entry name" value="DNA-directed RNA polymerase, insert domain"/>
    <property type="match status" value="1"/>
</dbReference>
<dbReference type="Gene3D" id="3.30.1360.10">
    <property type="entry name" value="RNA polymerase, RBP11-like subunit"/>
    <property type="match status" value="1"/>
</dbReference>
<dbReference type="HAMAP" id="MF_00059">
    <property type="entry name" value="RNApol_bact_RpoA"/>
    <property type="match status" value="1"/>
</dbReference>
<dbReference type="InterPro" id="IPR011262">
    <property type="entry name" value="DNA-dir_RNA_pol_insert"/>
</dbReference>
<dbReference type="InterPro" id="IPR011263">
    <property type="entry name" value="DNA-dir_RNA_pol_RpoA/D/Rpb3"/>
</dbReference>
<dbReference type="InterPro" id="IPR011773">
    <property type="entry name" value="DNA-dir_RpoA"/>
</dbReference>
<dbReference type="InterPro" id="IPR036603">
    <property type="entry name" value="RBP11-like"/>
</dbReference>
<dbReference type="InterPro" id="IPR011260">
    <property type="entry name" value="RNAP_asu_C"/>
</dbReference>
<dbReference type="InterPro" id="IPR036643">
    <property type="entry name" value="RNApol_insert_sf"/>
</dbReference>
<dbReference type="NCBIfam" id="NF003513">
    <property type="entry name" value="PRK05182.1-2"/>
    <property type="match status" value="1"/>
</dbReference>
<dbReference type="NCBIfam" id="NF003519">
    <property type="entry name" value="PRK05182.2-5"/>
    <property type="match status" value="1"/>
</dbReference>
<dbReference type="NCBIfam" id="TIGR02027">
    <property type="entry name" value="rpoA"/>
    <property type="match status" value="1"/>
</dbReference>
<dbReference type="Pfam" id="PF01000">
    <property type="entry name" value="RNA_pol_A_bac"/>
    <property type="match status" value="1"/>
</dbReference>
<dbReference type="Pfam" id="PF03118">
    <property type="entry name" value="RNA_pol_A_CTD"/>
    <property type="match status" value="1"/>
</dbReference>
<dbReference type="Pfam" id="PF01193">
    <property type="entry name" value="RNA_pol_L"/>
    <property type="match status" value="1"/>
</dbReference>
<dbReference type="SMART" id="SM00662">
    <property type="entry name" value="RPOLD"/>
    <property type="match status" value="1"/>
</dbReference>
<dbReference type="SUPFAM" id="SSF47789">
    <property type="entry name" value="C-terminal domain of RNA polymerase alpha subunit"/>
    <property type="match status" value="1"/>
</dbReference>
<dbReference type="SUPFAM" id="SSF56553">
    <property type="entry name" value="Insert subdomain of RNA polymerase alpha subunit"/>
    <property type="match status" value="1"/>
</dbReference>
<dbReference type="SUPFAM" id="SSF55257">
    <property type="entry name" value="RBP11-like subunits of RNA polymerase"/>
    <property type="match status" value="1"/>
</dbReference>
<keyword id="KW-0240">DNA-directed RNA polymerase</keyword>
<keyword id="KW-0548">Nucleotidyltransferase</keyword>
<keyword id="KW-1185">Reference proteome</keyword>
<keyword id="KW-0804">Transcription</keyword>
<keyword id="KW-0808">Transferase</keyword>
<organism>
    <name type="scientific">Caulobacter vibrioides (strain ATCC 19089 / CIP 103742 / CB 15)</name>
    <name type="common">Caulobacter crescentus</name>
    <dbReference type="NCBI Taxonomy" id="190650"/>
    <lineage>
        <taxon>Bacteria</taxon>
        <taxon>Pseudomonadati</taxon>
        <taxon>Pseudomonadota</taxon>
        <taxon>Alphaproteobacteria</taxon>
        <taxon>Caulobacterales</taxon>
        <taxon>Caulobacteraceae</taxon>
        <taxon>Caulobacter</taxon>
    </lineage>
</organism>
<proteinExistence type="inferred from homology"/>
<feature type="chain" id="PRO_0000175287" description="DNA-directed RNA polymerase subunit alpha">
    <location>
        <begin position="1"/>
        <end position="338"/>
    </location>
</feature>
<feature type="region of interest" description="Alpha N-terminal domain (alpha-NTD)" evidence="1">
    <location>
        <begin position="1"/>
        <end position="234"/>
    </location>
</feature>
<feature type="region of interest" description="Alpha C-terminal domain (alpha-CTD)" evidence="1">
    <location>
        <begin position="250"/>
        <end position="338"/>
    </location>
</feature>
<accession>Q9A8S9</accession>
<protein>
    <recommendedName>
        <fullName evidence="1">DNA-directed RNA polymerase subunit alpha</fullName>
        <shortName evidence="1">RNAP subunit alpha</shortName>
        <ecNumber evidence="1">2.7.7.6</ecNumber>
    </recommendedName>
    <alternativeName>
        <fullName evidence="1">RNA polymerase subunit alpha</fullName>
    </alternativeName>
    <alternativeName>
        <fullName evidence="1">Transcriptase subunit alpha</fullName>
    </alternativeName>
</protein>